<gene>
    <name type="ordered locus">TP_0304</name>
</gene>
<proteinExistence type="predicted"/>
<name>Y304_TREPA</name>
<organism>
    <name type="scientific">Treponema pallidum (strain Nichols)</name>
    <dbReference type="NCBI Taxonomy" id="243276"/>
    <lineage>
        <taxon>Bacteria</taxon>
        <taxon>Pseudomonadati</taxon>
        <taxon>Spirochaetota</taxon>
        <taxon>Spirochaetia</taxon>
        <taxon>Spirochaetales</taxon>
        <taxon>Treponemataceae</taxon>
        <taxon>Treponema</taxon>
    </lineage>
</organism>
<dbReference type="EMBL" id="AE000520">
    <property type="protein sequence ID" value="AAC65294.1"/>
    <property type="molecule type" value="Genomic_DNA"/>
</dbReference>
<dbReference type="PIR" id="B71342">
    <property type="entry name" value="B71342"/>
</dbReference>
<dbReference type="RefSeq" id="WP_010881753.1">
    <property type="nucleotide sequence ID" value="NC_021490.2"/>
</dbReference>
<dbReference type="STRING" id="243276.TP_0304"/>
<dbReference type="EnsemblBacteria" id="AAC65294">
    <property type="protein sequence ID" value="AAC65294"/>
    <property type="gene ID" value="TP_0304"/>
</dbReference>
<dbReference type="KEGG" id="tpa:TP_0304"/>
<dbReference type="KEGG" id="tpw:TPANIC_0304"/>
<dbReference type="eggNOG" id="COG0823">
    <property type="taxonomic scope" value="Bacteria"/>
</dbReference>
<dbReference type="HOGENOM" id="CLU_306939_0_0_12"/>
<dbReference type="OrthoDB" id="304612at2"/>
<dbReference type="Proteomes" id="UP000000811">
    <property type="component" value="Chromosome"/>
</dbReference>
<dbReference type="SUPFAM" id="SSF82171">
    <property type="entry name" value="DPP6 N-terminal domain-like"/>
    <property type="match status" value="1"/>
</dbReference>
<keyword id="KW-1185">Reference proteome</keyword>
<reference key="1">
    <citation type="journal article" date="1998" name="Science">
        <title>Complete genome sequence of Treponema pallidum, the syphilis spirochete.</title>
        <authorList>
            <person name="Fraser C.M."/>
            <person name="Norris S.J."/>
            <person name="Weinstock G.M."/>
            <person name="White O."/>
            <person name="Sutton G.G."/>
            <person name="Dodson R.J."/>
            <person name="Gwinn M.L."/>
            <person name="Hickey E.K."/>
            <person name="Clayton R.A."/>
            <person name="Ketchum K.A."/>
            <person name="Sodergren E."/>
            <person name="Hardham J.M."/>
            <person name="McLeod M.P."/>
            <person name="Salzberg S.L."/>
            <person name="Peterson J.D."/>
            <person name="Khalak H.G."/>
            <person name="Richardson D.L."/>
            <person name="Howell J.K."/>
            <person name="Chidambaram M."/>
            <person name="Utterback T.R."/>
            <person name="McDonald L.A."/>
            <person name="Artiach P."/>
            <person name="Bowman C."/>
            <person name="Cotton M.D."/>
            <person name="Fujii C."/>
            <person name="Garland S.A."/>
            <person name="Hatch B."/>
            <person name="Horst K."/>
            <person name="Roberts K.M."/>
            <person name="Sandusky M."/>
            <person name="Weidman J.F."/>
            <person name="Smith H.O."/>
            <person name="Venter J.C."/>
        </authorList>
    </citation>
    <scope>NUCLEOTIDE SEQUENCE [LARGE SCALE GENOMIC DNA]</scope>
    <source>
        <strain>Nichols</strain>
    </source>
</reference>
<sequence length="1039" mass="115874">MAPAAIPLPSEETTPPVIKIKAGSIRHECSVSMRFLKGSTLPLPCACRVDCPIGLHRTLLSNTMGPMNARAALALAMVFTFQRLCAEERFVISTEYFDIIYTEASTESARILAKHADRYEEQISLMLNRVPDKKKRTTVVLYAHTQDAGGSFSSKPSRKIIINDTRVPNLGLGSFKDSLLSIFYHELTHKISLDFFMPLLPPLFTEGVAVAFESNDGTQGRLHDPLTMHYLIQNKLENVSPSWREVAELRYNYPHGMPYVYGGKFTEYLQKIYGKERCARLWQNSWRLFIRHRFWDVFQKNLGTAWNEFIDSIPIPEKVAQPQLLSEREAQGHYGARSAAPTGFAYYDRDRHAVRFRDKAGGVRTLFSHDNTLHHLNFSEDGRYLAVSDTIDTWSERTHRVRVFDTHSGSFSPEVYTGASEACFVGNGQKIVFVRVQGQYSRLTLKDRTDPTFEKVLYEAGPGLPFGALYAPAYAGDGTVAIIGARGMERNLLFIPVDDRPMMQVPREQMPHAMRELQSQKIKGSWTLTFSWANMNMLSRLGFYDVSRHTFRLMDQDVSGGVFAPVVYEALPAAVHEESAAEATIRGEEPVVRVAYTGRHRMHMSQYQRDDRALRERRVSLVPLHPAEAEEQSRPATLMVNGEFIADVHEADRGRRYRAAQWMWPPTFSPRFVPPNSFSSLKDLGHTGLGVNMKFADPFGLVEVNLQSVSHFYPFFTSLGLKSSFYVGKTTYALRAYHEIDTGGFRYTKLGGAFETLTNFPMQDDRNAFFVRTAVGVDSYSCLCANGGGNGNCCGNNGGQQCCACNGQGANGPHYYKSLESPFIQAQVEMGYSFSQRAERTGTNWFVADVTGVSLKLHVANSFDTGKTKDAVLVQTKGSFRLPVVPLRVGVSAYVGYNAGWRGGKGNILAEHPVYGFPGPTYLPKLAGVGGMEGSCKKSKSAGFGAEAVLTILDYDISIYDPYLPVFYRNIVWNVSCEYVLNAPDFSSPKHLCVASTSLVLEFDLADVKVRAGVQYGFQLAETQSATTPGFSPIFSMAV</sequence>
<accession>O83326</accession>
<feature type="chain" id="PRO_0000202230" description="Uncharacterized protein TP_0304">
    <location>
        <begin position="1"/>
        <end position="1039"/>
    </location>
</feature>
<protein>
    <recommendedName>
        <fullName>Uncharacterized protein TP_0304</fullName>
    </recommendedName>
</protein>